<reference key="1">
    <citation type="journal article" date="2010" name="Genome Biol.">
        <title>Structure and dynamics of the pan-genome of Streptococcus pneumoniae and closely related species.</title>
        <authorList>
            <person name="Donati C."/>
            <person name="Hiller N.L."/>
            <person name="Tettelin H."/>
            <person name="Muzzi A."/>
            <person name="Croucher N.J."/>
            <person name="Angiuoli S.V."/>
            <person name="Oggioni M."/>
            <person name="Dunning Hotopp J.C."/>
            <person name="Hu F.Z."/>
            <person name="Riley D.R."/>
            <person name="Covacci A."/>
            <person name="Mitchell T.J."/>
            <person name="Bentley S.D."/>
            <person name="Kilian M."/>
            <person name="Ehrlich G.D."/>
            <person name="Rappuoli R."/>
            <person name="Moxon E.R."/>
            <person name="Masignani V."/>
        </authorList>
    </citation>
    <scope>NUCLEOTIDE SEQUENCE [LARGE SCALE GENOMIC DNA]</scope>
    <source>
        <strain>70585</strain>
    </source>
</reference>
<name>TRHO_STRP7</name>
<accession>C1C9Z1</accession>
<gene>
    <name evidence="1" type="primary">trhO</name>
    <name type="ordered locus">SP70585_0154</name>
</gene>
<proteinExistence type="inferred from homology"/>
<sequence length="328" mass="37892">MAKDIRVLLYYLYTPIENAEQFAADHLAFCKSIGLKGRILVADEGINGTVSGDYETTQKYMDYVHSLPGMEDLWFKIDEENEQAFKKMFVRYKKEIVHLGLEDNDFDNDINPLETTGAYLSPKEFKEALLDKDTVVLDTRNDYEYDLGHFRGAIRPDIRNFRELPQWVRDNKEKFMDKRVVVYCTGGVRCEKFSGWMVREGYKDVGQLHGGIATYGKDPEVQGELWDGKMYVFDERIAVDVNHVNPTIVGKDWFDGTPCERYVNCGNPFCNRRILTSEENEDKYLRGCSHECRVHPRNRYVSKNELTQAEVIERLAAIGESLDQAATV</sequence>
<feature type="chain" id="PRO_1000135477" description="tRNA uridine(34) hydroxylase">
    <location>
        <begin position="1"/>
        <end position="328"/>
    </location>
</feature>
<feature type="domain" description="Rhodanese" evidence="1">
    <location>
        <begin position="130"/>
        <end position="224"/>
    </location>
</feature>
<feature type="active site" description="Cysteine persulfide intermediate" evidence="1">
    <location>
        <position position="184"/>
    </location>
</feature>
<evidence type="ECO:0000255" key="1">
    <source>
        <dbReference type="HAMAP-Rule" id="MF_00469"/>
    </source>
</evidence>
<organism>
    <name type="scientific">Streptococcus pneumoniae (strain 70585)</name>
    <dbReference type="NCBI Taxonomy" id="488221"/>
    <lineage>
        <taxon>Bacteria</taxon>
        <taxon>Bacillati</taxon>
        <taxon>Bacillota</taxon>
        <taxon>Bacilli</taxon>
        <taxon>Lactobacillales</taxon>
        <taxon>Streptococcaceae</taxon>
        <taxon>Streptococcus</taxon>
    </lineage>
</organism>
<comment type="function">
    <text evidence="1">Catalyzes oxygen-dependent 5-hydroxyuridine (ho5U) modification at position 34 in tRNAs.</text>
</comment>
<comment type="catalytic activity">
    <reaction evidence="1">
        <text>uridine(34) in tRNA + AH2 + O2 = 5-hydroxyuridine(34) in tRNA + A + H2O</text>
        <dbReference type="Rhea" id="RHEA:64224"/>
        <dbReference type="Rhea" id="RHEA-COMP:11727"/>
        <dbReference type="Rhea" id="RHEA-COMP:13381"/>
        <dbReference type="ChEBI" id="CHEBI:13193"/>
        <dbReference type="ChEBI" id="CHEBI:15377"/>
        <dbReference type="ChEBI" id="CHEBI:15379"/>
        <dbReference type="ChEBI" id="CHEBI:17499"/>
        <dbReference type="ChEBI" id="CHEBI:65315"/>
        <dbReference type="ChEBI" id="CHEBI:136877"/>
    </reaction>
</comment>
<comment type="similarity">
    <text evidence="1">Belongs to the TrhO family.</text>
</comment>
<dbReference type="EC" id="1.14.-.-" evidence="1"/>
<dbReference type="EMBL" id="CP000918">
    <property type="protein sequence ID" value="ACO17229.1"/>
    <property type="molecule type" value="Genomic_DNA"/>
</dbReference>
<dbReference type="RefSeq" id="WP_001030014.1">
    <property type="nucleotide sequence ID" value="NC_012468.1"/>
</dbReference>
<dbReference type="SMR" id="C1C9Z1"/>
<dbReference type="KEGG" id="snm:SP70585_0154"/>
<dbReference type="HOGENOM" id="CLU_038878_1_0_9"/>
<dbReference type="Proteomes" id="UP000002211">
    <property type="component" value="Chromosome"/>
</dbReference>
<dbReference type="GO" id="GO:0016705">
    <property type="term" value="F:oxidoreductase activity, acting on paired donors, with incorporation or reduction of molecular oxygen"/>
    <property type="evidence" value="ECO:0007669"/>
    <property type="project" value="UniProtKB-UniRule"/>
</dbReference>
<dbReference type="GO" id="GO:0006400">
    <property type="term" value="P:tRNA modification"/>
    <property type="evidence" value="ECO:0007669"/>
    <property type="project" value="UniProtKB-UniRule"/>
</dbReference>
<dbReference type="CDD" id="cd01518">
    <property type="entry name" value="RHOD_YceA"/>
    <property type="match status" value="1"/>
</dbReference>
<dbReference type="Gene3D" id="3.30.70.100">
    <property type="match status" value="1"/>
</dbReference>
<dbReference type="Gene3D" id="3.40.250.10">
    <property type="entry name" value="Rhodanese-like domain"/>
    <property type="match status" value="1"/>
</dbReference>
<dbReference type="HAMAP" id="MF_00469">
    <property type="entry name" value="TrhO"/>
    <property type="match status" value="1"/>
</dbReference>
<dbReference type="InterPro" id="IPR001763">
    <property type="entry name" value="Rhodanese-like_dom"/>
</dbReference>
<dbReference type="InterPro" id="IPR036873">
    <property type="entry name" value="Rhodanese-like_dom_sf"/>
</dbReference>
<dbReference type="InterPro" id="IPR022111">
    <property type="entry name" value="Rhodanese_C"/>
</dbReference>
<dbReference type="InterPro" id="IPR020936">
    <property type="entry name" value="TrhO"/>
</dbReference>
<dbReference type="InterPro" id="IPR040503">
    <property type="entry name" value="TRHO_N"/>
</dbReference>
<dbReference type="NCBIfam" id="NF001135">
    <property type="entry name" value="PRK00142.1-3"/>
    <property type="match status" value="1"/>
</dbReference>
<dbReference type="NCBIfam" id="NF001137">
    <property type="entry name" value="PRK00142.1-5"/>
    <property type="match status" value="1"/>
</dbReference>
<dbReference type="PANTHER" id="PTHR43268:SF3">
    <property type="entry name" value="RHODANESE-LIKE DOMAIN-CONTAINING PROTEIN 7-RELATED"/>
    <property type="match status" value="1"/>
</dbReference>
<dbReference type="PANTHER" id="PTHR43268">
    <property type="entry name" value="THIOSULFATE SULFURTRANSFERASE/RHODANESE-LIKE DOMAIN-CONTAINING PROTEIN 2"/>
    <property type="match status" value="1"/>
</dbReference>
<dbReference type="Pfam" id="PF00581">
    <property type="entry name" value="Rhodanese"/>
    <property type="match status" value="1"/>
</dbReference>
<dbReference type="Pfam" id="PF12368">
    <property type="entry name" value="Rhodanese_C"/>
    <property type="match status" value="1"/>
</dbReference>
<dbReference type="Pfam" id="PF17773">
    <property type="entry name" value="UPF0176_N"/>
    <property type="match status" value="1"/>
</dbReference>
<dbReference type="SMART" id="SM00450">
    <property type="entry name" value="RHOD"/>
    <property type="match status" value="1"/>
</dbReference>
<dbReference type="SUPFAM" id="SSF52821">
    <property type="entry name" value="Rhodanese/Cell cycle control phosphatase"/>
    <property type="match status" value="1"/>
</dbReference>
<dbReference type="PROSITE" id="PS50206">
    <property type="entry name" value="RHODANESE_3"/>
    <property type="match status" value="1"/>
</dbReference>
<protein>
    <recommendedName>
        <fullName evidence="1">tRNA uridine(34) hydroxylase</fullName>
        <ecNumber evidence="1">1.14.-.-</ecNumber>
    </recommendedName>
    <alternativeName>
        <fullName evidence="1">tRNA hydroxylation protein O</fullName>
    </alternativeName>
</protein>
<keyword id="KW-0560">Oxidoreductase</keyword>
<keyword id="KW-0819">tRNA processing</keyword>